<evidence type="ECO:0000255" key="1">
    <source>
        <dbReference type="HAMAP-Rule" id="MF_00432"/>
    </source>
</evidence>
<accession>A0T0S7</accession>
<comment type="function">
    <text evidence="1">Component of the cytochrome b6-f complex, which mediates electron transfer between photosystem II (PSII) and photosystem I (PSI), cyclic electron flow around PSI, and state transitions. PetG is required for either the stability or assembly of the cytochrome b6-f complex.</text>
</comment>
<comment type="subunit">
    <text evidence="1">The 4 large subunits of the cytochrome b6-f complex are cytochrome b6, subunit IV (17 kDa polypeptide, PetD), cytochrome f and the Rieske protein, while the 4 small subunits are PetG, PetL, PetM and PetN. The complex functions as a dimer.</text>
</comment>
<comment type="subcellular location">
    <subcellularLocation>
        <location evidence="1">Plastid</location>
        <location evidence="1">Chloroplast thylakoid membrane</location>
        <topology evidence="1">Single-pass membrane protein</topology>
    </subcellularLocation>
</comment>
<comment type="similarity">
    <text evidence="1">Belongs to the PetG family.</text>
</comment>
<organism>
    <name type="scientific">Thalassiosira pseudonana</name>
    <name type="common">Marine diatom</name>
    <name type="synonym">Cyclotella nana</name>
    <dbReference type="NCBI Taxonomy" id="35128"/>
    <lineage>
        <taxon>Eukaryota</taxon>
        <taxon>Sar</taxon>
        <taxon>Stramenopiles</taxon>
        <taxon>Ochrophyta</taxon>
        <taxon>Bacillariophyta</taxon>
        <taxon>Coscinodiscophyceae</taxon>
        <taxon>Thalassiosirophycidae</taxon>
        <taxon>Thalassiosirales</taxon>
        <taxon>Thalassiosiraceae</taxon>
        <taxon>Thalassiosira</taxon>
    </lineage>
</organism>
<geneLocation type="chloroplast"/>
<feature type="chain" id="PRO_0000275517" description="Cytochrome b6-f complex subunit 5">
    <location>
        <begin position="1"/>
        <end position="37"/>
    </location>
</feature>
<feature type="transmembrane region" description="Helical" evidence="1">
    <location>
        <begin position="5"/>
        <end position="25"/>
    </location>
</feature>
<sequence>MVEPLLSGIVLGMITVSAFGLFVAAFLQYRRGNQFEI</sequence>
<gene>
    <name evidence="1" type="primary">petG</name>
</gene>
<reference key="1">
    <citation type="journal article" date="2007" name="Mol. Genet. Genomics">
        <title>Chloroplast genomes of the diatoms Phaeodactylum tricornutum and Thalassiosira pseudonana: comparison with other plastid genomes of the red lineage.</title>
        <authorList>
            <person name="Oudot-Le Secq M.-P."/>
            <person name="Grimwood J."/>
            <person name="Shapiro H."/>
            <person name="Armbrust E.V."/>
            <person name="Bowler C."/>
            <person name="Green B.R."/>
        </authorList>
    </citation>
    <scope>NUCLEOTIDE SEQUENCE [LARGE SCALE GENOMIC DNA]</scope>
    <source>
        <strain>CCMP1335 / NEPCC58 / CCAP 1085/12</strain>
    </source>
</reference>
<proteinExistence type="inferred from homology"/>
<dbReference type="EMBL" id="EF067921">
    <property type="protein sequence ID" value="ABK20762.1"/>
    <property type="molecule type" value="Genomic_DNA"/>
</dbReference>
<dbReference type="RefSeq" id="YP_874539.1">
    <property type="nucleotide sequence ID" value="NC_008589.1"/>
</dbReference>
<dbReference type="SMR" id="A0T0S7"/>
<dbReference type="STRING" id="35128.A0T0S7"/>
<dbReference type="GeneID" id="4524782"/>
<dbReference type="InParanoid" id="A0T0S7"/>
<dbReference type="GO" id="GO:0009535">
    <property type="term" value="C:chloroplast thylakoid membrane"/>
    <property type="evidence" value="ECO:0007669"/>
    <property type="project" value="UniProtKB-SubCell"/>
</dbReference>
<dbReference type="GO" id="GO:0009512">
    <property type="term" value="C:cytochrome b6f complex"/>
    <property type="evidence" value="ECO:0007669"/>
    <property type="project" value="InterPro"/>
</dbReference>
<dbReference type="GO" id="GO:0045158">
    <property type="term" value="F:electron transporter, transferring electrons within cytochrome b6/f complex of photosystem II activity"/>
    <property type="evidence" value="ECO:0007669"/>
    <property type="project" value="UniProtKB-UniRule"/>
</dbReference>
<dbReference type="GO" id="GO:0017004">
    <property type="term" value="P:cytochrome complex assembly"/>
    <property type="evidence" value="ECO:0007669"/>
    <property type="project" value="UniProtKB-UniRule"/>
</dbReference>
<dbReference type="GO" id="GO:0015979">
    <property type="term" value="P:photosynthesis"/>
    <property type="evidence" value="ECO:0007669"/>
    <property type="project" value="UniProtKB-KW"/>
</dbReference>
<dbReference type="HAMAP" id="MF_00432">
    <property type="entry name" value="Cytb6_f_PetG"/>
    <property type="match status" value="1"/>
</dbReference>
<dbReference type="InterPro" id="IPR003683">
    <property type="entry name" value="Cyt_6/f_cplx_su5"/>
</dbReference>
<dbReference type="InterPro" id="IPR036099">
    <property type="entry name" value="Cyt_6/f_cplx_su5_sf"/>
</dbReference>
<dbReference type="NCBIfam" id="NF001907">
    <property type="entry name" value="PRK00665.1"/>
    <property type="match status" value="1"/>
</dbReference>
<dbReference type="Pfam" id="PF02529">
    <property type="entry name" value="PetG"/>
    <property type="match status" value="1"/>
</dbReference>
<dbReference type="PIRSF" id="PIRSF000034">
    <property type="entry name" value="Cyt_b6-f_V"/>
    <property type="match status" value="1"/>
</dbReference>
<dbReference type="SUPFAM" id="SSF103446">
    <property type="entry name" value="PetG subunit of the cytochrome b6f complex"/>
    <property type="match status" value="1"/>
</dbReference>
<keyword id="KW-0150">Chloroplast</keyword>
<keyword id="KW-0249">Electron transport</keyword>
<keyword id="KW-0472">Membrane</keyword>
<keyword id="KW-0602">Photosynthesis</keyword>
<keyword id="KW-0934">Plastid</keyword>
<keyword id="KW-0793">Thylakoid</keyword>
<keyword id="KW-0812">Transmembrane</keyword>
<keyword id="KW-1133">Transmembrane helix</keyword>
<keyword id="KW-0813">Transport</keyword>
<protein>
    <recommendedName>
        <fullName evidence="1">Cytochrome b6-f complex subunit 5</fullName>
    </recommendedName>
    <alternativeName>
        <fullName evidence="1">Cytochrome b6-f complex subunit PetG</fullName>
    </alternativeName>
    <alternativeName>
        <fullName evidence="1">Cytochrome b6-f complex subunit V</fullName>
    </alternativeName>
</protein>
<name>PETG_THAPS</name>